<comment type="function">
    <text evidence="2">Binds to the catalytic subunit of the cyclin dependent kinases and is essential for their biological function. Has a role in the exit from M phase during early mitotic cell division. More specifically, thought to act by the degrading B-type cyclins that causes breakdown of nuclear envelope and exit mitosis (By similarity).</text>
</comment>
<comment type="subunit">
    <text evidence="1">Forms a homohexamer that can probably bind six kinase subunits. Interacts with cdk-1 (By similarity).</text>
</comment>
<comment type="subcellular location">
    <subcellularLocation>
        <location evidence="1 4">Nucleus</location>
    </subcellularLocation>
</comment>
<comment type="similarity">
    <text evidence="3">Belongs to the CKS family.</text>
</comment>
<reference evidence="5" key="1">
    <citation type="journal article" date="2003" name="PLoS Biol.">
        <title>The genome sequence of Caenorhabditis briggsae: a platform for comparative genomics.</title>
        <authorList>
            <person name="Stein L.D."/>
            <person name="Bao Z."/>
            <person name="Blasiar D."/>
            <person name="Blumenthal T."/>
            <person name="Brent M.R."/>
            <person name="Chen N."/>
            <person name="Chinwalla A."/>
            <person name="Clarke L."/>
            <person name="Clee C."/>
            <person name="Coghlan A."/>
            <person name="Coulson A."/>
            <person name="D'Eustachio P."/>
            <person name="Fitch D.H.A."/>
            <person name="Fulton L.A."/>
            <person name="Fulton R.E."/>
            <person name="Griffiths-Jones S."/>
            <person name="Harris T.W."/>
            <person name="Hillier L.W."/>
            <person name="Kamath R."/>
            <person name="Kuwabara P.E."/>
            <person name="Mardis E.R."/>
            <person name="Marra M.A."/>
            <person name="Miner T.L."/>
            <person name="Minx P."/>
            <person name="Mullikin J.C."/>
            <person name="Plumb R.W."/>
            <person name="Rogers J."/>
            <person name="Schein J.E."/>
            <person name="Sohrmann M."/>
            <person name="Spieth J."/>
            <person name="Stajich J.E."/>
            <person name="Wei C."/>
            <person name="Willey D."/>
            <person name="Wilson R.K."/>
            <person name="Durbin R.M."/>
            <person name="Waterston R.H."/>
        </authorList>
    </citation>
    <scope>NUCLEOTIDE SEQUENCE [LARGE SCALE GENOMIC DNA]</scope>
    <source>
        <strain evidence="5">AF16</strain>
    </source>
</reference>
<gene>
    <name evidence="5" type="primary">cks-1</name>
    <name type="ORF">CBG15632</name>
</gene>
<proteinExistence type="inferred from homology"/>
<accession>A8XMF2</accession>
<organism>
    <name type="scientific">Caenorhabditis briggsae</name>
    <dbReference type="NCBI Taxonomy" id="6238"/>
    <lineage>
        <taxon>Eukaryota</taxon>
        <taxon>Metazoa</taxon>
        <taxon>Ecdysozoa</taxon>
        <taxon>Nematoda</taxon>
        <taxon>Chromadorea</taxon>
        <taxon>Rhabditida</taxon>
        <taxon>Rhabditina</taxon>
        <taxon>Rhabditomorpha</taxon>
        <taxon>Rhabditoidea</taxon>
        <taxon>Rhabditidae</taxon>
        <taxon>Peloderinae</taxon>
        <taxon>Caenorhabditis</taxon>
    </lineage>
</organism>
<feature type="chain" id="PRO_0000353200" description="Cyclin-dependent kinases regulatory subunit">
    <location>
        <begin position="1"/>
        <end position="94"/>
    </location>
</feature>
<keyword id="KW-0131">Cell cycle</keyword>
<keyword id="KW-0132">Cell division</keyword>
<keyword id="KW-0498">Mitosis</keyword>
<keyword id="KW-0539">Nucleus</keyword>
<keyword id="KW-1185">Reference proteome</keyword>
<sequence length="94" mass="10876">MTTGSNDFYYSNKYEDDEYEYRHVHVTKDVAKLIPKNRLMSETEWRSLGIQQSPGWIHYMIHGPERHVLLFRRPLPNAQKTVRGGGGTSAVGVR</sequence>
<protein>
    <recommendedName>
        <fullName evidence="2">Cyclin-dependent kinases regulatory subunit</fullName>
    </recommendedName>
</protein>
<name>CKS1_CAEBR</name>
<evidence type="ECO:0000250" key="1"/>
<evidence type="ECO:0000250" key="2">
    <source>
        <dbReference type="UniProtKB" id="Q17868"/>
    </source>
</evidence>
<evidence type="ECO:0000255" key="3"/>
<evidence type="ECO:0000305" key="4"/>
<evidence type="ECO:0000312" key="5">
    <source>
        <dbReference type="EMBL" id="CAP33828.1"/>
    </source>
</evidence>
<dbReference type="EMBL" id="HE600937">
    <property type="protein sequence ID" value="CAP33828.1"/>
    <property type="molecule type" value="Genomic_DNA"/>
</dbReference>
<dbReference type="SMR" id="A8XMF2"/>
<dbReference type="FunCoup" id="A8XMF2">
    <property type="interactions" value="1335"/>
</dbReference>
<dbReference type="STRING" id="6238.A8XMF2"/>
<dbReference type="EnsemblMetazoa" id="CBG15632.1">
    <property type="protein sequence ID" value="CBG15632.1"/>
    <property type="gene ID" value="WBGene00035798"/>
</dbReference>
<dbReference type="KEGG" id="cbr:CBG_15632"/>
<dbReference type="CTD" id="8582759"/>
<dbReference type="WormBase" id="CBG15632">
    <property type="protein sequence ID" value="CBP03784"/>
    <property type="gene ID" value="WBGene00035798"/>
    <property type="gene designation" value="Cbr-cks-1"/>
</dbReference>
<dbReference type="eggNOG" id="KOG3484">
    <property type="taxonomic scope" value="Eukaryota"/>
</dbReference>
<dbReference type="HOGENOM" id="CLU_140546_2_0_1"/>
<dbReference type="InParanoid" id="A8XMF2"/>
<dbReference type="OMA" id="AHYETHR"/>
<dbReference type="OrthoDB" id="440676at2759"/>
<dbReference type="Proteomes" id="UP000008549">
    <property type="component" value="Unassembled WGS sequence"/>
</dbReference>
<dbReference type="GO" id="GO:0000307">
    <property type="term" value="C:cyclin-dependent protein kinase holoenzyme complex"/>
    <property type="evidence" value="ECO:0000318"/>
    <property type="project" value="GO_Central"/>
</dbReference>
<dbReference type="GO" id="GO:0005634">
    <property type="term" value="C:nucleus"/>
    <property type="evidence" value="ECO:0007669"/>
    <property type="project" value="UniProtKB-SubCell"/>
</dbReference>
<dbReference type="GO" id="GO:0019005">
    <property type="term" value="C:SCF ubiquitin ligase complex"/>
    <property type="evidence" value="ECO:0000318"/>
    <property type="project" value="GO_Central"/>
</dbReference>
<dbReference type="GO" id="GO:0061575">
    <property type="term" value="F:cyclin-dependent protein serine/threonine kinase activator activity"/>
    <property type="evidence" value="ECO:0000318"/>
    <property type="project" value="GO_Central"/>
</dbReference>
<dbReference type="GO" id="GO:0042393">
    <property type="term" value="F:histone binding"/>
    <property type="evidence" value="ECO:0000318"/>
    <property type="project" value="GO_Central"/>
</dbReference>
<dbReference type="GO" id="GO:0019901">
    <property type="term" value="F:protein kinase binding"/>
    <property type="evidence" value="ECO:0000250"/>
    <property type="project" value="UniProtKB"/>
</dbReference>
<dbReference type="GO" id="GO:0043130">
    <property type="term" value="F:ubiquitin binding"/>
    <property type="evidence" value="ECO:0000318"/>
    <property type="project" value="GO_Central"/>
</dbReference>
<dbReference type="GO" id="GO:0051301">
    <property type="term" value="P:cell division"/>
    <property type="evidence" value="ECO:0007669"/>
    <property type="project" value="UniProtKB-KW"/>
</dbReference>
<dbReference type="GO" id="GO:0007346">
    <property type="term" value="P:regulation of mitotic cell cycle"/>
    <property type="evidence" value="ECO:0000318"/>
    <property type="project" value="GO_Central"/>
</dbReference>
<dbReference type="GO" id="GO:0009794">
    <property type="term" value="P:regulation of mitotic cell cycle, embryonic"/>
    <property type="evidence" value="ECO:0000250"/>
    <property type="project" value="UniProtKB"/>
</dbReference>
<dbReference type="FunFam" id="3.30.170.10:FF:000001">
    <property type="entry name" value="Cyclin-dependent kinases regulatory subunit"/>
    <property type="match status" value="1"/>
</dbReference>
<dbReference type="Gene3D" id="3.30.170.10">
    <property type="entry name" value="Cyclin-dependent kinase, regulatory subunit"/>
    <property type="match status" value="1"/>
</dbReference>
<dbReference type="InterPro" id="IPR000789">
    <property type="entry name" value="Cyclin-dep_kinase_reg-sub"/>
</dbReference>
<dbReference type="InterPro" id="IPR036858">
    <property type="entry name" value="Cyclin-dep_kinase_reg-sub_sf"/>
</dbReference>
<dbReference type="PANTHER" id="PTHR23415">
    <property type="entry name" value="CYCLIN-DEPENDENT KINASES REGULATORY SUBUNIT/60S RIBOSOME SUBUNIT BIOGENESIS PROTEIN NIP7"/>
    <property type="match status" value="1"/>
</dbReference>
<dbReference type="Pfam" id="PF01111">
    <property type="entry name" value="CKS"/>
    <property type="match status" value="1"/>
</dbReference>
<dbReference type="PRINTS" id="PR00296">
    <property type="entry name" value="CYCLINKINASE"/>
</dbReference>
<dbReference type="SMART" id="SM01084">
    <property type="entry name" value="CKS"/>
    <property type="match status" value="1"/>
</dbReference>
<dbReference type="SUPFAM" id="SSF55637">
    <property type="entry name" value="Cell cycle regulatory proteins"/>
    <property type="match status" value="1"/>
</dbReference>
<dbReference type="PROSITE" id="PS00944">
    <property type="entry name" value="CKS_1"/>
    <property type="match status" value="1"/>
</dbReference>
<dbReference type="PROSITE" id="PS00945">
    <property type="entry name" value="CKS_2"/>
    <property type="match status" value="1"/>
</dbReference>